<keyword id="KW-0067">ATP-binding</keyword>
<keyword id="KW-0997">Cell inner membrane</keyword>
<keyword id="KW-1003">Cell membrane</keyword>
<keyword id="KW-0418">Kinase</keyword>
<keyword id="KW-0472">Membrane</keyword>
<keyword id="KW-0547">Nucleotide-binding</keyword>
<keyword id="KW-1185">Reference proteome</keyword>
<keyword id="KW-0808">Transferase</keyword>
<keyword id="KW-0812">Transmembrane</keyword>
<keyword id="KW-1133">Transmembrane helix</keyword>
<keyword id="KW-0831">Ubiquinone biosynthesis</keyword>
<name>UBIB_YERPE</name>
<organism>
    <name type="scientific">Yersinia pestis</name>
    <dbReference type="NCBI Taxonomy" id="632"/>
    <lineage>
        <taxon>Bacteria</taxon>
        <taxon>Pseudomonadati</taxon>
        <taxon>Pseudomonadota</taxon>
        <taxon>Gammaproteobacteria</taxon>
        <taxon>Enterobacterales</taxon>
        <taxon>Yersiniaceae</taxon>
        <taxon>Yersinia</taxon>
    </lineage>
</organism>
<feature type="chain" id="PRO_0000200728" description="Probable protein kinase UbiB">
    <location>
        <begin position="1"/>
        <end position="543"/>
    </location>
</feature>
<feature type="transmembrane region" description="Helical" evidence="1">
    <location>
        <begin position="517"/>
        <end position="539"/>
    </location>
</feature>
<feature type="domain" description="Protein kinase" evidence="1">
    <location>
        <begin position="123"/>
        <end position="501"/>
    </location>
</feature>
<feature type="active site" description="Proton acceptor" evidence="1">
    <location>
        <position position="287"/>
    </location>
</feature>
<feature type="binding site" evidence="1">
    <location>
        <begin position="129"/>
        <end position="137"/>
    </location>
    <ligand>
        <name>ATP</name>
        <dbReference type="ChEBI" id="CHEBI:30616"/>
    </ligand>
</feature>
<feature type="binding site" evidence="1">
    <location>
        <position position="152"/>
    </location>
    <ligand>
        <name>ATP</name>
        <dbReference type="ChEBI" id="CHEBI:30616"/>
    </ligand>
</feature>
<proteinExistence type="inferred from homology"/>
<dbReference type="EC" id="2.7.-.-" evidence="1"/>
<dbReference type="EMBL" id="AL590842">
    <property type="protein sequence ID" value="CAL22365.1"/>
    <property type="molecule type" value="Genomic_DNA"/>
</dbReference>
<dbReference type="EMBL" id="AE009952">
    <property type="protein sequence ID" value="AAM84040.1"/>
    <property type="molecule type" value="Genomic_DNA"/>
</dbReference>
<dbReference type="EMBL" id="AE017042">
    <property type="protein sequence ID" value="AAS63438.1"/>
    <property type="molecule type" value="Genomic_DNA"/>
</dbReference>
<dbReference type="PIR" id="AB0460">
    <property type="entry name" value="AB0460"/>
</dbReference>
<dbReference type="RefSeq" id="WP_002211535.1">
    <property type="nucleotide sequence ID" value="NZ_WUCM01000048.1"/>
</dbReference>
<dbReference type="RefSeq" id="YP_002348656.1">
    <property type="nucleotide sequence ID" value="NC_003143.1"/>
</dbReference>
<dbReference type="SMR" id="Q8ZAM1"/>
<dbReference type="STRING" id="214092.YPO3779"/>
<dbReference type="PaxDb" id="214092-YPO3779"/>
<dbReference type="EnsemblBacteria" id="AAS63438">
    <property type="protein sequence ID" value="AAS63438"/>
    <property type="gene ID" value="YP_3270"/>
</dbReference>
<dbReference type="GeneID" id="57974929"/>
<dbReference type="KEGG" id="ype:YPO3779"/>
<dbReference type="KEGG" id="ypk:y0451"/>
<dbReference type="KEGG" id="ypm:YP_3270"/>
<dbReference type="PATRIC" id="fig|214092.21.peg.4301"/>
<dbReference type="eggNOG" id="COG0661">
    <property type="taxonomic scope" value="Bacteria"/>
</dbReference>
<dbReference type="HOGENOM" id="CLU_006533_0_0_6"/>
<dbReference type="OMA" id="FQTARRF"/>
<dbReference type="OrthoDB" id="9795390at2"/>
<dbReference type="UniPathway" id="UPA00232"/>
<dbReference type="Proteomes" id="UP000000815">
    <property type="component" value="Chromosome"/>
</dbReference>
<dbReference type="Proteomes" id="UP000001019">
    <property type="component" value="Chromosome"/>
</dbReference>
<dbReference type="Proteomes" id="UP000002490">
    <property type="component" value="Chromosome"/>
</dbReference>
<dbReference type="GO" id="GO:0005886">
    <property type="term" value="C:plasma membrane"/>
    <property type="evidence" value="ECO:0007669"/>
    <property type="project" value="UniProtKB-SubCell"/>
</dbReference>
<dbReference type="GO" id="GO:0005524">
    <property type="term" value="F:ATP binding"/>
    <property type="evidence" value="ECO:0007669"/>
    <property type="project" value="UniProtKB-KW"/>
</dbReference>
<dbReference type="GO" id="GO:0004672">
    <property type="term" value="F:protein kinase activity"/>
    <property type="evidence" value="ECO:0007669"/>
    <property type="project" value="UniProtKB-UniRule"/>
</dbReference>
<dbReference type="GO" id="GO:0010795">
    <property type="term" value="P:regulation of ubiquinone biosynthetic process"/>
    <property type="evidence" value="ECO:0007669"/>
    <property type="project" value="UniProtKB-UniRule"/>
</dbReference>
<dbReference type="GO" id="GO:0006744">
    <property type="term" value="P:ubiquinone biosynthetic process"/>
    <property type="evidence" value="ECO:0007669"/>
    <property type="project" value="UniProtKB-UniPathway"/>
</dbReference>
<dbReference type="CDD" id="cd13972">
    <property type="entry name" value="UbiB"/>
    <property type="match status" value="1"/>
</dbReference>
<dbReference type="HAMAP" id="MF_00414">
    <property type="entry name" value="UbiB"/>
    <property type="match status" value="1"/>
</dbReference>
<dbReference type="InterPro" id="IPR004147">
    <property type="entry name" value="ABC1_dom"/>
</dbReference>
<dbReference type="InterPro" id="IPR011009">
    <property type="entry name" value="Kinase-like_dom_sf"/>
</dbReference>
<dbReference type="InterPro" id="IPR010232">
    <property type="entry name" value="UbiB"/>
</dbReference>
<dbReference type="InterPro" id="IPR045308">
    <property type="entry name" value="UbiB_bact"/>
</dbReference>
<dbReference type="InterPro" id="IPR050154">
    <property type="entry name" value="UbiB_kinase"/>
</dbReference>
<dbReference type="NCBIfam" id="NF003404">
    <property type="entry name" value="PRK04750.1"/>
    <property type="match status" value="1"/>
</dbReference>
<dbReference type="NCBIfam" id="TIGR01982">
    <property type="entry name" value="UbiB"/>
    <property type="match status" value="1"/>
</dbReference>
<dbReference type="PANTHER" id="PTHR10566">
    <property type="entry name" value="CHAPERONE-ACTIVITY OF BC1 COMPLEX CABC1 -RELATED"/>
    <property type="match status" value="1"/>
</dbReference>
<dbReference type="PANTHER" id="PTHR10566:SF113">
    <property type="entry name" value="PROTEIN ACTIVITY OF BC1 COMPLEX KINASE 7, CHLOROPLASTIC"/>
    <property type="match status" value="1"/>
</dbReference>
<dbReference type="Pfam" id="PF03109">
    <property type="entry name" value="ABC1"/>
    <property type="match status" value="1"/>
</dbReference>
<dbReference type="SUPFAM" id="SSF56112">
    <property type="entry name" value="Protein kinase-like (PK-like)"/>
    <property type="match status" value="1"/>
</dbReference>
<gene>
    <name evidence="1" type="primary">ubiB</name>
    <name type="synonym">aarF</name>
    <name type="ordered locus">YPO3779</name>
    <name type="ordered locus">y0451</name>
    <name type="ordered locus">YP_3270</name>
</gene>
<evidence type="ECO:0000255" key="1">
    <source>
        <dbReference type="HAMAP-Rule" id="MF_00414"/>
    </source>
</evidence>
<comment type="function">
    <text evidence="1">Is probably a protein kinase regulator of UbiI activity which is involved in aerobic coenzyme Q (ubiquinone) biosynthesis.</text>
</comment>
<comment type="pathway">
    <text>Cofactor biosynthesis; ubiquinone biosynthesis [regulation].</text>
</comment>
<comment type="subcellular location">
    <subcellularLocation>
        <location evidence="1">Cell inner membrane</location>
        <topology evidence="1">Single-pass membrane protein</topology>
    </subcellularLocation>
</comment>
<comment type="similarity">
    <text evidence="1">Belongs to the ABC1 family. UbiB subfamily.</text>
</comment>
<sequence>MTPGELRRLYLIIRVFLSYGLDELIPNIRLTLPLRVGRHLFFWLSNRHKDKSLGERLRLALQELGPVWIKFGQMMSTRRDLFPPNIADQLALLQDRVASFDGALARKHIEIAMGGALETWFDDFDSQALASASIAQVHTARLKENGKEVVLKVIRPDILPIIKADVRLMYRLAGWVPKLLPDGRRLRPREVVREYEKTLLDELNLLREAANAIQLRRNFEDSPMLYIPEVYSDYCRESVLVMERIYGIPVSDIAALEDQGTNMKLLAERGVQVFFTQVFRDSFFHADMHPGNIFVSYEHPHDPLYIGIDCGIVGSLNKADKRYLAENFIAFFNRDYRRVAELHVDSGWVPRDTNVEDFEFAIRTVCEPIFEKPLAEISFGHVLLNLFNTARRFNMEVQPQLVLLQKTLLYVEGLGRQLYPQLDLWTTAKPFLESWLRDQVGLPAVIRALKEKAPFWAEKFPELPELVYDSLQQHKLLQQSVEKLTIQIQGQQQRQGQSRYLFGVGATLLVSGTILFLADATEVSTGFIVAGALAWFIGWRRTC</sequence>
<reference key="1">
    <citation type="journal article" date="2001" name="Nature">
        <title>Genome sequence of Yersinia pestis, the causative agent of plague.</title>
        <authorList>
            <person name="Parkhill J."/>
            <person name="Wren B.W."/>
            <person name="Thomson N.R."/>
            <person name="Titball R.W."/>
            <person name="Holden M.T.G."/>
            <person name="Prentice M.B."/>
            <person name="Sebaihia M."/>
            <person name="James K.D."/>
            <person name="Churcher C.M."/>
            <person name="Mungall K.L."/>
            <person name="Baker S."/>
            <person name="Basham D."/>
            <person name="Bentley S.D."/>
            <person name="Brooks K."/>
            <person name="Cerdeno-Tarraga A.-M."/>
            <person name="Chillingworth T."/>
            <person name="Cronin A."/>
            <person name="Davies R.M."/>
            <person name="Davis P."/>
            <person name="Dougan G."/>
            <person name="Feltwell T."/>
            <person name="Hamlin N."/>
            <person name="Holroyd S."/>
            <person name="Jagels K."/>
            <person name="Karlyshev A.V."/>
            <person name="Leather S."/>
            <person name="Moule S."/>
            <person name="Oyston P.C.F."/>
            <person name="Quail M.A."/>
            <person name="Rutherford K.M."/>
            <person name="Simmonds M."/>
            <person name="Skelton J."/>
            <person name="Stevens K."/>
            <person name="Whitehead S."/>
            <person name="Barrell B.G."/>
        </authorList>
    </citation>
    <scope>NUCLEOTIDE SEQUENCE [LARGE SCALE GENOMIC DNA]</scope>
    <source>
        <strain>CO-92 / Biovar Orientalis</strain>
    </source>
</reference>
<reference key="2">
    <citation type="journal article" date="2002" name="J. Bacteriol.">
        <title>Genome sequence of Yersinia pestis KIM.</title>
        <authorList>
            <person name="Deng W."/>
            <person name="Burland V."/>
            <person name="Plunkett G. III"/>
            <person name="Boutin A."/>
            <person name="Mayhew G.F."/>
            <person name="Liss P."/>
            <person name="Perna N.T."/>
            <person name="Rose D.J."/>
            <person name="Mau B."/>
            <person name="Zhou S."/>
            <person name="Schwartz D.C."/>
            <person name="Fetherston J.D."/>
            <person name="Lindler L.E."/>
            <person name="Brubaker R.R."/>
            <person name="Plano G.V."/>
            <person name="Straley S.C."/>
            <person name="McDonough K.A."/>
            <person name="Nilles M.L."/>
            <person name="Matson J.S."/>
            <person name="Blattner F.R."/>
            <person name="Perry R.D."/>
        </authorList>
    </citation>
    <scope>NUCLEOTIDE SEQUENCE [LARGE SCALE GENOMIC DNA]</scope>
    <source>
        <strain>KIM10+ / Biovar Mediaevalis</strain>
    </source>
</reference>
<reference key="3">
    <citation type="journal article" date="2004" name="DNA Res.">
        <title>Complete genome sequence of Yersinia pestis strain 91001, an isolate avirulent to humans.</title>
        <authorList>
            <person name="Song Y."/>
            <person name="Tong Z."/>
            <person name="Wang J."/>
            <person name="Wang L."/>
            <person name="Guo Z."/>
            <person name="Han Y."/>
            <person name="Zhang J."/>
            <person name="Pei D."/>
            <person name="Zhou D."/>
            <person name="Qin H."/>
            <person name="Pang X."/>
            <person name="Han Y."/>
            <person name="Zhai J."/>
            <person name="Li M."/>
            <person name="Cui B."/>
            <person name="Qi Z."/>
            <person name="Jin L."/>
            <person name="Dai R."/>
            <person name="Chen F."/>
            <person name="Li S."/>
            <person name="Ye C."/>
            <person name="Du Z."/>
            <person name="Lin W."/>
            <person name="Wang J."/>
            <person name="Yu J."/>
            <person name="Yang H."/>
            <person name="Wang J."/>
            <person name="Huang P."/>
            <person name="Yang R."/>
        </authorList>
    </citation>
    <scope>NUCLEOTIDE SEQUENCE [LARGE SCALE GENOMIC DNA]</scope>
    <source>
        <strain>91001 / Biovar Mediaevalis</strain>
    </source>
</reference>
<protein>
    <recommendedName>
        <fullName evidence="1">Probable protein kinase UbiB</fullName>
        <ecNumber evidence="1">2.7.-.-</ecNumber>
    </recommendedName>
    <alternativeName>
        <fullName evidence="1">Ubiquinone biosynthesis protein UbiB</fullName>
    </alternativeName>
</protein>
<accession>Q8ZAM1</accession>
<accession>Q0WAN2</accession>